<accession>Q6DC58</accession>
<proteinExistence type="evidence at transcript level"/>
<feature type="chain" id="PRO_0000360422" description="Transmembrane protein 223">
    <location>
        <begin position="1"/>
        <end position="248"/>
    </location>
</feature>
<feature type="transmembrane region" description="Helical" evidence="2">
    <location>
        <begin position="46"/>
        <end position="68"/>
    </location>
</feature>
<feature type="transmembrane region" description="Helical" evidence="2">
    <location>
        <begin position="84"/>
        <end position="104"/>
    </location>
</feature>
<feature type="transmembrane region" description="Helical" evidence="2">
    <location>
        <begin position="140"/>
        <end position="160"/>
    </location>
</feature>
<evidence type="ECO:0000250" key="1">
    <source>
        <dbReference type="UniProtKB" id="A0PJW6"/>
    </source>
</evidence>
<evidence type="ECO:0000255" key="2"/>
<evidence type="ECO:0000303" key="3">
    <source ref="1"/>
</evidence>
<evidence type="ECO:0000305" key="4"/>
<comment type="function">
    <text evidence="1">Mitochondrial ribosome-associated protein involved in the first steps of cytochrome c oxidase complex (complex IV) biogenesis. Stimulates the translation of MT-CO1 mRNA and is a constituent of early MT-CO1 assembly intermediates.</text>
</comment>
<comment type="subcellular location">
    <subcellularLocation>
        <location evidence="1">Mitochondrion inner membrane</location>
        <topology evidence="2">Multi-pass membrane protein</topology>
    </subcellularLocation>
</comment>
<comment type="similarity">
    <text evidence="4">Belongs to the TMEM223 family.</text>
</comment>
<name>TM223_DANRE</name>
<protein>
    <recommendedName>
        <fullName evidence="4">Transmembrane protein 223</fullName>
    </recommendedName>
</protein>
<dbReference type="EMBL" id="BC078226">
    <property type="protein sequence ID" value="AAH78226.1"/>
    <property type="molecule type" value="mRNA"/>
</dbReference>
<dbReference type="RefSeq" id="NP_001003594.1">
    <property type="nucleotide sequence ID" value="NM_001003594.2"/>
</dbReference>
<dbReference type="FunCoup" id="Q6DC58">
    <property type="interactions" value="729"/>
</dbReference>
<dbReference type="STRING" id="7955.ENSDARP00000091975"/>
<dbReference type="PaxDb" id="7955-ENSDARP00000091975"/>
<dbReference type="Ensembl" id="ENSDART00000101201">
    <property type="protein sequence ID" value="ENSDARP00000091975"/>
    <property type="gene ID" value="ENSDARG00000069494"/>
</dbReference>
<dbReference type="GeneID" id="445200"/>
<dbReference type="KEGG" id="dre:445200"/>
<dbReference type="AGR" id="ZFIN:ZDB-GENE-040801-113"/>
<dbReference type="CTD" id="79064"/>
<dbReference type="ZFIN" id="ZDB-GENE-040801-113">
    <property type="gene designation" value="tmem223"/>
</dbReference>
<dbReference type="eggNOG" id="ENOG502S0RN">
    <property type="taxonomic scope" value="Eukaryota"/>
</dbReference>
<dbReference type="HOGENOM" id="CLU_099187_0_0_1"/>
<dbReference type="InParanoid" id="Q6DC58"/>
<dbReference type="OMA" id="KQVSCMA"/>
<dbReference type="OrthoDB" id="5950063at2759"/>
<dbReference type="PhylomeDB" id="Q6DC58"/>
<dbReference type="TreeFam" id="TF324862"/>
<dbReference type="PRO" id="PR:Q6DC58"/>
<dbReference type="Proteomes" id="UP000000437">
    <property type="component" value="Chromosome 21"/>
</dbReference>
<dbReference type="Bgee" id="ENSDARG00000069494">
    <property type="expression patterns" value="Expressed in ovary and 22 other cell types or tissues"/>
</dbReference>
<dbReference type="GO" id="GO:0005743">
    <property type="term" value="C:mitochondrial inner membrane"/>
    <property type="evidence" value="ECO:0000250"/>
    <property type="project" value="UniProtKB"/>
</dbReference>
<dbReference type="GO" id="GO:0005739">
    <property type="term" value="C:mitochondrion"/>
    <property type="evidence" value="ECO:0000250"/>
    <property type="project" value="UniProtKB"/>
</dbReference>
<dbReference type="GO" id="GO:0097177">
    <property type="term" value="F:mitochondrial ribosome binding"/>
    <property type="evidence" value="ECO:0000250"/>
    <property type="project" value="UniProtKB"/>
</dbReference>
<dbReference type="GO" id="GO:0033617">
    <property type="term" value="P:mitochondrial cytochrome c oxidase assembly"/>
    <property type="evidence" value="ECO:0000250"/>
    <property type="project" value="UniProtKB"/>
</dbReference>
<dbReference type="InterPro" id="IPR026100">
    <property type="entry name" value="Tmem223"/>
</dbReference>
<dbReference type="InterPro" id="IPR045325">
    <property type="entry name" value="TMEM70/TMEM186/TMEM223"/>
</dbReference>
<dbReference type="PANTHER" id="PTHR14549">
    <property type="entry name" value="TRANSMEMBRANE PROTEIN 223"/>
    <property type="match status" value="1"/>
</dbReference>
<dbReference type="PANTHER" id="PTHR14549:SF2">
    <property type="entry name" value="TRANSMEMBRANE PROTEIN 223"/>
    <property type="match status" value="1"/>
</dbReference>
<dbReference type="Pfam" id="PF06979">
    <property type="entry name" value="TMEM70"/>
    <property type="match status" value="1"/>
</dbReference>
<keyword id="KW-0472">Membrane</keyword>
<keyword id="KW-0496">Mitochondrion</keyword>
<keyword id="KW-0999">Mitochondrion inner membrane</keyword>
<keyword id="KW-1185">Reference proteome</keyword>
<keyword id="KW-0812">Transmembrane</keyword>
<keyword id="KW-1133">Transmembrane helix</keyword>
<sequence>MAVQHLLFGVRRSCTFILACRRTAFQSSRAFTSIYTQFKVTDTKNIFRPLVFPVRVASAFTFTSAAVAKDVLLFEHDRTRFFRLLAIFCGGQFLFWAYLGHFAFTSLRDTRKYSEPQKVRTELGGFFSFDMNLGSNAWRYGFTSGCLIIGGGILALALLFSRRSVSRVILHKGGAKVSVYTQSPLGPQRSHHLTVPLSQVACYAHRQESHSFIPLKVKGYKFYFLLDKEGTVNNPKLFDITVGAYRPL</sequence>
<gene>
    <name evidence="1" type="primary">tmem223</name>
    <name evidence="3" type="ORF">zgc:101024</name>
</gene>
<organism>
    <name type="scientific">Danio rerio</name>
    <name type="common">Zebrafish</name>
    <name type="synonym">Brachydanio rerio</name>
    <dbReference type="NCBI Taxonomy" id="7955"/>
    <lineage>
        <taxon>Eukaryota</taxon>
        <taxon>Metazoa</taxon>
        <taxon>Chordata</taxon>
        <taxon>Craniata</taxon>
        <taxon>Vertebrata</taxon>
        <taxon>Euteleostomi</taxon>
        <taxon>Actinopterygii</taxon>
        <taxon>Neopterygii</taxon>
        <taxon>Teleostei</taxon>
        <taxon>Ostariophysi</taxon>
        <taxon>Cypriniformes</taxon>
        <taxon>Danionidae</taxon>
        <taxon>Danioninae</taxon>
        <taxon>Danio</taxon>
    </lineage>
</organism>
<reference key="1">
    <citation type="submission" date="2004-07" db="EMBL/GenBank/DDBJ databases">
        <authorList>
            <consortium name="NIH - Zebrafish Gene Collection (ZGC) project"/>
        </authorList>
    </citation>
    <scope>NUCLEOTIDE SEQUENCE [LARGE SCALE MRNA]</scope>
    <source>
        <tissue>Embryo</tissue>
    </source>
</reference>